<proteinExistence type="inferred from homology"/>
<gene>
    <name type="primary">prfA</name>
    <name type="synonym">prf1</name>
    <name type="ordered locus">PA4665</name>
</gene>
<protein>
    <recommendedName>
        <fullName>Peptide chain release factor 1</fullName>
        <shortName>RF-1</shortName>
    </recommendedName>
</protein>
<accession>P42806</accession>
<accession>Q9HVC7</accession>
<keyword id="KW-0963">Cytoplasm</keyword>
<keyword id="KW-0488">Methylation</keyword>
<keyword id="KW-0648">Protein biosynthesis</keyword>
<keyword id="KW-1185">Reference proteome</keyword>
<comment type="function">
    <text evidence="1">Peptide chain release factor 1 directs the termination of translation in response to the peptide chain termination codons UAG and UAA.</text>
</comment>
<comment type="subcellular location">
    <subcellularLocation>
        <location evidence="1">Cytoplasm</location>
    </subcellularLocation>
</comment>
<comment type="PTM">
    <text evidence="1">Methylated by PrmC. Methylation increases the termination efficiency of RF1 (By similarity).</text>
</comment>
<comment type="similarity">
    <text evidence="2">Belongs to the prokaryotic/mitochondrial release factor family.</text>
</comment>
<reference key="1">
    <citation type="journal article" date="2000" name="Nature">
        <title>Complete genome sequence of Pseudomonas aeruginosa PAO1, an opportunistic pathogen.</title>
        <authorList>
            <person name="Stover C.K."/>
            <person name="Pham X.-Q.T."/>
            <person name="Erwin A.L."/>
            <person name="Mizoguchi S.D."/>
            <person name="Warrener P."/>
            <person name="Hickey M.J."/>
            <person name="Brinkman F.S.L."/>
            <person name="Hufnagle W.O."/>
            <person name="Kowalik D.J."/>
            <person name="Lagrou M."/>
            <person name="Garber R.L."/>
            <person name="Goltry L."/>
            <person name="Tolentino E."/>
            <person name="Westbrock-Wadman S."/>
            <person name="Yuan Y."/>
            <person name="Brody L.L."/>
            <person name="Coulter S.N."/>
            <person name="Folger K.R."/>
            <person name="Kas A."/>
            <person name="Larbig K."/>
            <person name="Lim R.M."/>
            <person name="Smith K.A."/>
            <person name="Spencer D.H."/>
            <person name="Wong G.K.-S."/>
            <person name="Wu Z."/>
            <person name="Paulsen I.T."/>
            <person name="Reizer J."/>
            <person name="Saier M.H. Jr."/>
            <person name="Hancock R.E.W."/>
            <person name="Lory S."/>
            <person name="Olson M.V."/>
        </authorList>
    </citation>
    <scope>NUCLEOTIDE SEQUENCE [LARGE SCALE GENOMIC DNA]</scope>
    <source>
        <strain>ATCC 15692 / DSM 22644 / CIP 104116 / JCM 14847 / LMG 12228 / 1C / PRS 101 / PAO1</strain>
    </source>
</reference>
<reference key="2">
    <citation type="journal article" date="1995" name="J. Bacteriol.">
        <title>Regulation of the hemA gene during 5-aminolevulinic acid formation in Pseudomonas aeruginosa.</title>
        <authorList>
            <person name="Hungerer C."/>
            <person name="Troup B."/>
            <person name="Roemling U."/>
            <person name="Jahn D."/>
        </authorList>
    </citation>
    <scope>NUCLEOTIDE SEQUENCE [GENOMIC DNA] OF 1-96</scope>
    <source>
        <strain>ATCC 15692 / DSM 22644 / CIP 104116 / JCM 14847 / LMG 12228 / 1C / PRS 101 / PAO1</strain>
    </source>
</reference>
<evidence type="ECO:0000250" key="1"/>
<evidence type="ECO:0000305" key="2"/>
<feature type="chain" id="PRO_0000177723" description="Peptide chain release factor 1">
    <location>
        <begin position="1"/>
        <end position="360"/>
    </location>
</feature>
<feature type="modified residue" description="N5-methylglutamine" evidence="1">
    <location>
        <position position="237"/>
    </location>
</feature>
<feature type="sequence conflict" description="In Ref. 2; CAA57573." evidence="2" ref="2">
    <original>TR</original>
    <variation>DP</variation>
    <location>
        <begin position="33"/>
        <end position="34"/>
    </location>
</feature>
<feature type="sequence conflict" description="In Ref. 2; CAA57573." evidence="2" ref="2">
    <original>A</original>
    <variation>R</variation>
    <location>
        <position position="51"/>
    </location>
</feature>
<feature type="sequence conflict" description="In Ref. 2; CAA57573." evidence="2" ref="2">
    <original>ALGD</original>
    <variation>PRRQ</variation>
    <location>
        <begin position="93"/>
        <end position="96"/>
    </location>
</feature>
<dbReference type="EMBL" id="AE004091">
    <property type="protein sequence ID" value="AAG08052.1"/>
    <property type="molecule type" value="Genomic_DNA"/>
</dbReference>
<dbReference type="EMBL" id="X82071">
    <property type="protein sequence ID" value="CAA57573.1"/>
    <property type="molecule type" value="Genomic_DNA"/>
</dbReference>
<dbReference type="PIR" id="B83063">
    <property type="entry name" value="B83063"/>
</dbReference>
<dbReference type="PIR" id="S49377">
    <property type="entry name" value="S49377"/>
</dbReference>
<dbReference type="RefSeq" id="NP_253354.1">
    <property type="nucleotide sequence ID" value="NC_002516.2"/>
</dbReference>
<dbReference type="RefSeq" id="WP_003114692.1">
    <property type="nucleotide sequence ID" value="NZ_QZGE01000029.1"/>
</dbReference>
<dbReference type="SMR" id="P42806"/>
<dbReference type="FunCoup" id="P42806">
    <property type="interactions" value="626"/>
</dbReference>
<dbReference type="STRING" id="208964.PA4665"/>
<dbReference type="PaxDb" id="208964-PA4665"/>
<dbReference type="GeneID" id="881360"/>
<dbReference type="KEGG" id="pae:PA4665"/>
<dbReference type="PATRIC" id="fig|208964.12.peg.4887"/>
<dbReference type="PseudoCAP" id="PA4665"/>
<dbReference type="HOGENOM" id="CLU_036856_0_1_6"/>
<dbReference type="InParanoid" id="P42806"/>
<dbReference type="OrthoDB" id="9806673at2"/>
<dbReference type="PhylomeDB" id="P42806"/>
<dbReference type="BioCyc" id="PAER208964:G1FZ6-4761-MONOMER"/>
<dbReference type="Proteomes" id="UP000002438">
    <property type="component" value="Chromosome"/>
</dbReference>
<dbReference type="GO" id="GO:0005737">
    <property type="term" value="C:cytoplasm"/>
    <property type="evidence" value="ECO:0007669"/>
    <property type="project" value="UniProtKB-SubCell"/>
</dbReference>
<dbReference type="GO" id="GO:0016149">
    <property type="term" value="F:translation release factor activity, codon specific"/>
    <property type="evidence" value="ECO:0007669"/>
    <property type="project" value="UniProtKB-UniRule"/>
</dbReference>
<dbReference type="FunFam" id="3.30.160.20:FF:000004">
    <property type="entry name" value="Peptide chain release factor 1"/>
    <property type="match status" value="1"/>
</dbReference>
<dbReference type="FunFam" id="3.30.70.1660:FF:000002">
    <property type="entry name" value="Peptide chain release factor 1"/>
    <property type="match status" value="1"/>
</dbReference>
<dbReference type="FunFam" id="3.30.70.1660:FF:000004">
    <property type="entry name" value="Peptide chain release factor 1"/>
    <property type="match status" value="1"/>
</dbReference>
<dbReference type="Gene3D" id="3.30.160.20">
    <property type="match status" value="1"/>
</dbReference>
<dbReference type="Gene3D" id="3.30.70.1660">
    <property type="match status" value="1"/>
</dbReference>
<dbReference type="Gene3D" id="6.10.140.1950">
    <property type="match status" value="1"/>
</dbReference>
<dbReference type="HAMAP" id="MF_00093">
    <property type="entry name" value="Rel_fac_1"/>
    <property type="match status" value="1"/>
</dbReference>
<dbReference type="InterPro" id="IPR005139">
    <property type="entry name" value="PCRF"/>
</dbReference>
<dbReference type="InterPro" id="IPR000352">
    <property type="entry name" value="Pep_chain_release_fac_I"/>
</dbReference>
<dbReference type="InterPro" id="IPR045853">
    <property type="entry name" value="Pep_chain_release_fac_I_sf"/>
</dbReference>
<dbReference type="InterPro" id="IPR050057">
    <property type="entry name" value="Prokaryotic/Mito_RF"/>
</dbReference>
<dbReference type="InterPro" id="IPR004373">
    <property type="entry name" value="RF-1"/>
</dbReference>
<dbReference type="NCBIfam" id="TIGR00019">
    <property type="entry name" value="prfA"/>
    <property type="match status" value="1"/>
</dbReference>
<dbReference type="NCBIfam" id="NF001859">
    <property type="entry name" value="PRK00591.1"/>
    <property type="match status" value="1"/>
</dbReference>
<dbReference type="PANTHER" id="PTHR43804">
    <property type="entry name" value="LD18447P"/>
    <property type="match status" value="1"/>
</dbReference>
<dbReference type="PANTHER" id="PTHR43804:SF7">
    <property type="entry name" value="LD18447P"/>
    <property type="match status" value="1"/>
</dbReference>
<dbReference type="Pfam" id="PF03462">
    <property type="entry name" value="PCRF"/>
    <property type="match status" value="1"/>
</dbReference>
<dbReference type="Pfam" id="PF00472">
    <property type="entry name" value="RF-1"/>
    <property type="match status" value="1"/>
</dbReference>
<dbReference type="SMART" id="SM00937">
    <property type="entry name" value="PCRF"/>
    <property type="match status" value="1"/>
</dbReference>
<dbReference type="SUPFAM" id="SSF75620">
    <property type="entry name" value="Release factor"/>
    <property type="match status" value="1"/>
</dbReference>
<dbReference type="PROSITE" id="PS00745">
    <property type="entry name" value="RF_PROK_I"/>
    <property type="match status" value="1"/>
</dbReference>
<sequence length="360" mass="40041">MKASLLKKLDVLSDRYEELTALLGDAEVISDQTRFRAYSREYAEVEPVILAFRDYRKVQADLEGAQALLKDSDPELRDLAEEEVAEARGRLAALGDSLQRMLLPKDPNDSRNVFLEIRAGTGGDEAAIFSGDLFRMYSRYAERQGWRIETLSENEGEHGGYKEVIARVEGDNVYAKLKFESGAHRVQRVPETESQGRIHTSACTVAVLPEPDEQAAIEINPADLRVDTYRSSGAGGQHVNKTDSAVRITHIPSGIVVECQEERSQHKNRAKAMAWLAAKLNDQQQAAAQQAIASTRKLLVGSGDRSERIRTYNFPQGRVTDHRINLTLYSLGEVMEGAVEQVIEPLLQEYQADQLAALGD</sequence>
<organism>
    <name type="scientific">Pseudomonas aeruginosa (strain ATCC 15692 / DSM 22644 / CIP 104116 / JCM 14847 / LMG 12228 / 1C / PRS 101 / PAO1)</name>
    <dbReference type="NCBI Taxonomy" id="208964"/>
    <lineage>
        <taxon>Bacteria</taxon>
        <taxon>Pseudomonadati</taxon>
        <taxon>Pseudomonadota</taxon>
        <taxon>Gammaproteobacteria</taxon>
        <taxon>Pseudomonadales</taxon>
        <taxon>Pseudomonadaceae</taxon>
        <taxon>Pseudomonas</taxon>
    </lineage>
</organism>
<name>RF1_PSEAE</name>